<feature type="chain" id="PRO_0000341823" description="2-succinyl-5-enolpyruvyl-6-hydroxy-3-cyclohexene-1-carboxylate synthase">
    <location>
        <begin position="1"/>
        <end position="556"/>
    </location>
</feature>
<accession>A9N5A2</accession>
<dbReference type="EC" id="2.2.1.9" evidence="1"/>
<dbReference type="EMBL" id="CP000886">
    <property type="protein sequence ID" value="ABX66098.1"/>
    <property type="molecule type" value="Genomic_DNA"/>
</dbReference>
<dbReference type="RefSeq" id="WP_000116382.1">
    <property type="nucleotide sequence ID" value="NC_010102.1"/>
</dbReference>
<dbReference type="SMR" id="A9N5A2"/>
<dbReference type="KEGG" id="spq:SPAB_00672"/>
<dbReference type="PATRIC" id="fig|1016998.12.peg.632"/>
<dbReference type="HOGENOM" id="CLU_006051_3_0_6"/>
<dbReference type="BioCyc" id="SENT1016998:SPAB_RS02790-MONOMER"/>
<dbReference type="UniPathway" id="UPA00079"/>
<dbReference type="UniPathway" id="UPA01057">
    <property type="reaction ID" value="UER00164"/>
</dbReference>
<dbReference type="Proteomes" id="UP000008556">
    <property type="component" value="Chromosome"/>
</dbReference>
<dbReference type="GO" id="GO:0070204">
    <property type="term" value="F:2-succinyl-5-enolpyruvyl-6-hydroxy-3-cyclohexene-1-carboxylic-acid synthase activity"/>
    <property type="evidence" value="ECO:0007669"/>
    <property type="project" value="UniProtKB-UniRule"/>
</dbReference>
<dbReference type="GO" id="GO:0000287">
    <property type="term" value="F:magnesium ion binding"/>
    <property type="evidence" value="ECO:0007669"/>
    <property type="project" value="UniProtKB-UniRule"/>
</dbReference>
<dbReference type="GO" id="GO:0030145">
    <property type="term" value="F:manganese ion binding"/>
    <property type="evidence" value="ECO:0007669"/>
    <property type="project" value="UniProtKB-UniRule"/>
</dbReference>
<dbReference type="GO" id="GO:0030976">
    <property type="term" value="F:thiamine pyrophosphate binding"/>
    <property type="evidence" value="ECO:0007669"/>
    <property type="project" value="UniProtKB-UniRule"/>
</dbReference>
<dbReference type="GO" id="GO:0009234">
    <property type="term" value="P:menaquinone biosynthetic process"/>
    <property type="evidence" value="ECO:0007669"/>
    <property type="project" value="UniProtKB-UniRule"/>
</dbReference>
<dbReference type="CDD" id="cd07037">
    <property type="entry name" value="TPP_PYR_MenD"/>
    <property type="match status" value="1"/>
</dbReference>
<dbReference type="CDD" id="cd02009">
    <property type="entry name" value="TPP_SHCHC_synthase"/>
    <property type="match status" value="1"/>
</dbReference>
<dbReference type="FunFam" id="3.40.50.1220:FF:000010">
    <property type="entry name" value="2-succinyl-5-enolpyruvyl-6-hydroxy-3-cyclohexene-1-carboxylate synthase"/>
    <property type="match status" value="1"/>
</dbReference>
<dbReference type="FunFam" id="3.40.50.970:FF:000029">
    <property type="entry name" value="2-succinyl-5-enolpyruvyl-6-hydroxy-3-cyclohexene-1-carboxylate synthase"/>
    <property type="match status" value="1"/>
</dbReference>
<dbReference type="Gene3D" id="3.40.50.970">
    <property type="match status" value="2"/>
</dbReference>
<dbReference type="Gene3D" id="3.40.50.1220">
    <property type="entry name" value="TPP-binding domain"/>
    <property type="match status" value="1"/>
</dbReference>
<dbReference type="HAMAP" id="MF_01659">
    <property type="entry name" value="MenD"/>
    <property type="match status" value="1"/>
</dbReference>
<dbReference type="InterPro" id="IPR004433">
    <property type="entry name" value="MenaQ_synth_MenD"/>
</dbReference>
<dbReference type="InterPro" id="IPR032264">
    <property type="entry name" value="MenD_middle"/>
</dbReference>
<dbReference type="InterPro" id="IPR029061">
    <property type="entry name" value="THDP-binding"/>
</dbReference>
<dbReference type="InterPro" id="IPR012001">
    <property type="entry name" value="Thiamin_PyroP_enz_TPP-bd_dom"/>
</dbReference>
<dbReference type="InterPro" id="IPR011766">
    <property type="entry name" value="TPP_enzyme_TPP-bd"/>
</dbReference>
<dbReference type="NCBIfam" id="TIGR00173">
    <property type="entry name" value="menD"/>
    <property type="match status" value="1"/>
</dbReference>
<dbReference type="PANTHER" id="PTHR42916">
    <property type="entry name" value="2-SUCCINYL-5-ENOLPYRUVYL-6-HYDROXY-3-CYCLOHEXENE-1-CARBOXYLATE SYNTHASE"/>
    <property type="match status" value="1"/>
</dbReference>
<dbReference type="PANTHER" id="PTHR42916:SF1">
    <property type="entry name" value="PROTEIN PHYLLO, CHLOROPLASTIC"/>
    <property type="match status" value="1"/>
</dbReference>
<dbReference type="Pfam" id="PF02775">
    <property type="entry name" value="TPP_enzyme_C"/>
    <property type="match status" value="1"/>
</dbReference>
<dbReference type="Pfam" id="PF16582">
    <property type="entry name" value="TPP_enzyme_M_2"/>
    <property type="match status" value="1"/>
</dbReference>
<dbReference type="Pfam" id="PF02776">
    <property type="entry name" value="TPP_enzyme_N"/>
    <property type="match status" value="1"/>
</dbReference>
<dbReference type="PIRSF" id="PIRSF004983">
    <property type="entry name" value="MenD"/>
    <property type="match status" value="1"/>
</dbReference>
<dbReference type="SUPFAM" id="SSF52518">
    <property type="entry name" value="Thiamin diphosphate-binding fold (THDP-binding)"/>
    <property type="match status" value="2"/>
</dbReference>
<gene>
    <name evidence="1" type="primary">menD</name>
    <name type="ordered locus">SPAB_00672</name>
</gene>
<proteinExistence type="inferred from homology"/>
<reference key="1">
    <citation type="submission" date="2007-11" db="EMBL/GenBank/DDBJ databases">
        <authorList>
            <consortium name="The Salmonella enterica serovar Paratyphi B Genome Sequencing Project"/>
            <person name="McClelland M."/>
            <person name="Sanderson E.K."/>
            <person name="Porwollik S."/>
            <person name="Spieth J."/>
            <person name="Clifton W.S."/>
            <person name="Fulton R."/>
            <person name="Cordes M."/>
            <person name="Wollam A."/>
            <person name="Shah N."/>
            <person name="Pepin K."/>
            <person name="Bhonagiri V."/>
            <person name="Nash W."/>
            <person name="Johnson M."/>
            <person name="Thiruvilangam P."/>
            <person name="Wilson R."/>
        </authorList>
    </citation>
    <scope>NUCLEOTIDE SEQUENCE [LARGE SCALE GENOMIC DNA]</scope>
    <source>
        <strain>ATCC BAA-1250 / SPB7</strain>
    </source>
</reference>
<evidence type="ECO:0000255" key="1">
    <source>
        <dbReference type="HAMAP-Rule" id="MF_01659"/>
    </source>
</evidence>
<organism>
    <name type="scientific">Salmonella paratyphi B (strain ATCC BAA-1250 / SPB7)</name>
    <dbReference type="NCBI Taxonomy" id="1016998"/>
    <lineage>
        <taxon>Bacteria</taxon>
        <taxon>Pseudomonadati</taxon>
        <taxon>Pseudomonadota</taxon>
        <taxon>Gammaproteobacteria</taxon>
        <taxon>Enterobacterales</taxon>
        <taxon>Enterobacteriaceae</taxon>
        <taxon>Salmonella</taxon>
    </lineage>
</organism>
<name>MEND_SALPB</name>
<protein>
    <recommendedName>
        <fullName evidence="1">2-succinyl-5-enolpyruvyl-6-hydroxy-3-cyclohexene-1-carboxylate synthase</fullName>
        <shortName evidence="1">SEPHCHC synthase</shortName>
        <ecNumber evidence="1">2.2.1.9</ecNumber>
    </recommendedName>
    <alternativeName>
        <fullName evidence="1">Menaquinone biosynthesis protein MenD</fullName>
    </alternativeName>
</protein>
<keyword id="KW-0460">Magnesium</keyword>
<keyword id="KW-0464">Manganese</keyword>
<keyword id="KW-0474">Menaquinone biosynthesis</keyword>
<keyword id="KW-0479">Metal-binding</keyword>
<keyword id="KW-0786">Thiamine pyrophosphate</keyword>
<keyword id="KW-0808">Transferase</keyword>
<sequence length="556" mass="61465">MSVSAFNRRWAAVILEALTRHGVRHVCIAPGSRSTPLTLAAAENPAFIHHTHFDERGLGHLALGLAKVSQQPVAVIVTSGTAVANLYPALIEAGLTGEKLILLTADRPPELIDCGANQAIRQAGMFASHPSQTLSLPRPTQDIPARWLVSTIDNALAMLHAGALHINCPFAEPLYGDMNDTGLVWQQRLGDWWQDEKPWLREARRLASDKQRDWFFWRQKRGVVVAGRMSAEEGKKVAQWAQTLGWPLIGDVLSQTGQPLPCADLWLGNAKAVTELQQAQIVVQLGSSLTGKRLLQWQATCEPEEYWVIDNIEGRLDPAHHRGRRLVAKIADWLELHPAEKRKPWCVEIPRLAELAWQRVVAQRDTFGEAQLAHRIRDYLPEQGQLFVGNSLVVRLIDALSQLPAGYPVYSNRGASGIDGLLSTAAGVQRASAKSTLAIVGDLSALYDLNALALLRQVSAPFVLIVVNNNGGQIFSLLPTPQSKRERFYLMPQNVHFDHAAAMFNLRYHRPENWEELESALAGAWRTPATTVIELVVNDTDGAQTLQQLLAQVSHL</sequence>
<comment type="function">
    <text evidence="1">Catalyzes the thiamine diphosphate-dependent decarboxylation of 2-oxoglutarate and the subsequent addition of the resulting succinic semialdehyde-thiamine pyrophosphate anion to isochorismate to yield 2-succinyl-5-enolpyruvyl-6-hydroxy-3-cyclohexene-1-carboxylate (SEPHCHC).</text>
</comment>
<comment type="catalytic activity">
    <reaction evidence="1">
        <text>isochorismate + 2-oxoglutarate + H(+) = 5-enolpyruvoyl-6-hydroxy-2-succinyl-cyclohex-3-ene-1-carboxylate + CO2</text>
        <dbReference type="Rhea" id="RHEA:25593"/>
        <dbReference type="ChEBI" id="CHEBI:15378"/>
        <dbReference type="ChEBI" id="CHEBI:16526"/>
        <dbReference type="ChEBI" id="CHEBI:16810"/>
        <dbReference type="ChEBI" id="CHEBI:29780"/>
        <dbReference type="ChEBI" id="CHEBI:58818"/>
        <dbReference type="EC" id="2.2.1.9"/>
    </reaction>
</comment>
<comment type="cofactor">
    <cofactor evidence="1">
        <name>Mg(2+)</name>
        <dbReference type="ChEBI" id="CHEBI:18420"/>
    </cofactor>
    <cofactor evidence="1">
        <name>Mn(2+)</name>
        <dbReference type="ChEBI" id="CHEBI:29035"/>
    </cofactor>
</comment>
<comment type="cofactor">
    <cofactor evidence="1">
        <name>thiamine diphosphate</name>
        <dbReference type="ChEBI" id="CHEBI:58937"/>
    </cofactor>
    <text evidence="1">Binds 1 thiamine pyrophosphate per subunit.</text>
</comment>
<comment type="pathway">
    <text evidence="1">Quinol/quinone metabolism; 1,4-dihydroxy-2-naphthoate biosynthesis; 1,4-dihydroxy-2-naphthoate from chorismate: step 2/7.</text>
</comment>
<comment type="pathway">
    <text evidence="1">Quinol/quinone metabolism; menaquinone biosynthesis.</text>
</comment>
<comment type="subunit">
    <text evidence="1">Homodimer.</text>
</comment>
<comment type="similarity">
    <text evidence="1">Belongs to the TPP enzyme family. MenD subfamily.</text>
</comment>